<protein>
    <recommendedName>
        <fullName evidence="1">Large ribosomal subunit protein uL15</fullName>
    </recommendedName>
    <alternativeName>
        <fullName evidence="3">50S ribosomal protein L15</fullName>
    </alternativeName>
</protein>
<feature type="chain" id="PRO_0000104668" description="Large ribosomal subunit protein uL15">
    <location>
        <begin position="1"/>
        <end position="146"/>
    </location>
</feature>
<feature type="region of interest" description="Disordered" evidence="2">
    <location>
        <begin position="1"/>
        <end position="52"/>
    </location>
</feature>
<feature type="compositionally biased region" description="Basic and acidic residues" evidence="2">
    <location>
        <begin position="1"/>
        <end position="13"/>
    </location>
</feature>
<feature type="compositionally biased region" description="Gly residues" evidence="2">
    <location>
        <begin position="21"/>
        <end position="31"/>
    </location>
</feature>
<feature type="compositionally biased region" description="Gly residues" evidence="2">
    <location>
        <begin position="42"/>
        <end position="52"/>
    </location>
</feature>
<gene>
    <name evidence="1" type="primary">rplO</name>
    <name type="ordered locus">BC_0150</name>
</gene>
<dbReference type="EMBL" id="AE016877">
    <property type="protein sequence ID" value="AAP07231.1"/>
    <property type="molecule type" value="Genomic_DNA"/>
</dbReference>
<dbReference type="RefSeq" id="NP_830030.1">
    <property type="nucleotide sequence ID" value="NC_004722.1"/>
</dbReference>
<dbReference type="RefSeq" id="WP_000766081.1">
    <property type="nucleotide sequence ID" value="NZ_CP138336.1"/>
</dbReference>
<dbReference type="SMR" id="Q81J23"/>
<dbReference type="STRING" id="226900.BC_0150"/>
<dbReference type="KEGG" id="bce:BC0150"/>
<dbReference type="PATRIC" id="fig|226900.8.peg.151"/>
<dbReference type="HOGENOM" id="CLU_055188_4_2_9"/>
<dbReference type="OrthoDB" id="9810293at2"/>
<dbReference type="Proteomes" id="UP000001417">
    <property type="component" value="Chromosome"/>
</dbReference>
<dbReference type="GO" id="GO:0022625">
    <property type="term" value="C:cytosolic large ribosomal subunit"/>
    <property type="evidence" value="ECO:0000318"/>
    <property type="project" value="GO_Central"/>
</dbReference>
<dbReference type="GO" id="GO:0019843">
    <property type="term" value="F:rRNA binding"/>
    <property type="evidence" value="ECO:0007669"/>
    <property type="project" value="UniProtKB-UniRule"/>
</dbReference>
<dbReference type="GO" id="GO:0003735">
    <property type="term" value="F:structural constituent of ribosome"/>
    <property type="evidence" value="ECO:0000318"/>
    <property type="project" value="GO_Central"/>
</dbReference>
<dbReference type="GO" id="GO:0006412">
    <property type="term" value="P:translation"/>
    <property type="evidence" value="ECO:0007669"/>
    <property type="project" value="UniProtKB-UniRule"/>
</dbReference>
<dbReference type="FunFam" id="3.100.10.10:FF:000004">
    <property type="entry name" value="50S ribosomal protein L15"/>
    <property type="match status" value="1"/>
</dbReference>
<dbReference type="Gene3D" id="3.100.10.10">
    <property type="match status" value="1"/>
</dbReference>
<dbReference type="HAMAP" id="MF_01341">
    <property type="entry name" value="Ribosomal_uL15"/>
    <property type="match status" value="1"/>
</dbReference>
<dbReference type="InterPro" id="IPR030878">
    <property type="entry name" value="Ribosomal_uL15"/>
</dbReference>
<dbReference type="InterPro" id="IPR021131">
    <property type="entry name" value="Ribosomal_uL15/eL18"/>
</dbReference>
<dbReference type="InterPro" id="IPR036227">
    <property type="entry name" value="Ribosomal_uL15/eL18_sf"/>
</dbReference>
<dbReference type="InterPro" id="IPR005749">
    <property type="entry name" value="Ribosomal_uL15_bac-type"/>
</dbReference>
<dbReference type="InterPro" id="IPR001196">
    <property type="entry name" value="Ribosomal_uL15_CS"/>
</dbReference>
<dbReference type="NCBIfam" id="TIGR01071">
    <property type="entry name" value="rplO_bact"/>
    <property type="match status" value="1"/>
</dbReference>
<dbReference type="PANTHER" id="PTHR12934">
    <property type="entry name" value="50S RIBOSOMAL PROTEIN L15"/>
    <property type="match status" value="1"/>
</dbReference>
<dbReference type="PANTHER" id="PTHR12934:SF11">
    <property type="entry name" value="LARGE RIBOSOMAL SUBUNIT PROTEIN UL15M"/>
    <property type="match status" value="1"/>
</dbReference>
<dbReference type="Pfam" id="PF00828">
    <property type="entry name" value="Ribosomal_L27A"/>
    <property type="match status" value="1"/>
</dbReference>
<dbReference type="SUPFAM" id="SSF52080">
    <property type="entry name" value="Ribosomal proteins L15p and L18e"/>
    <property type="match status" value="1"/>
</dbReference>
<dbReference type="PROSITE" id="PS00475">
    <property type="entry name" value="RIBOSOMAL_L15"/>
    <property type="match status" value="1"/>
</dbReference>
<organism>
    <name type="scientific">Bacillus cereus (strain ATCC 14579 / DSM 31 / CCUG 7414 / JCM 2152 / NBRC 15305 / NCIMB 9373 / NCTC 2599 / NRRL B-3711)</name>
    <dbReference type="NCBI Taxonomy" id="226900"/>
    <lineage>
        <taxon>Bacteria</taxon>
        <taxon>Bacillati</taxon>
        <taxon>Bacillota</taxon>
        <taxon>Bacilli</taxon>
        <taxon>Bacillales</taxon>
        <taxon>Bacillaceae</taxon>
        <taxon>Bacillus</taxon>
        <taxon>Bacillus cereus group</taxon>
    </lineage>
</organism>
<reference key="1">
    <citation type="journal article" date="2003" name="Nature">
        <title>Genome sequence of Bacillus cereus and comparative analysis with Bacillus anthracis.</title>
        <authorList>
            <person name="Ivanova N."/>
            <person name="Sorokin A."/>
            <person name="Anderson I."/>
            <person name="Galleron N."/>
            <person name="Candelon B."/>
            <person name="Kapatral V."/>
            <person name="Bhattacharyya A."/>
            <person name="Reznik G."/>
            <person name="Mikhailova N."/>
            <person name="Lapidus A."/>
            <person name="Chu L."/>
            <person name="Mazur M."/>
            <person name="Goltsman E."/>
            <person name="Larsen N."/>
            <person name="D'Souza M."/>
            <person name="Walunas T."/>
            <person name="Grechkin Y."/>
            <person name="Pusch G."/>
            <person name="Haselkorn R."/>
            <person name="Fonstein M."/>
            <person name="Ehrlich S.D."/>
            <person name="Overbeek R."/>
            <person name="Kyrpides N.C."/>
        </authorList>
    </citation>
    <scope>NUCLEOTIDE SEQUENCE [LARGE SCALE GENOMIC DNA]</scope>
    <source>
        <strain>ATCC 14579 / DSM 31 / CCUG 7414 / JCM 2152 / NBRC 15305 / NCIMB 9373 / NCTC 2599 / NRRL B-3711</strain>
    </source>
</reference>
<sequence length="146" mass="15478">MKLHELKPAEGSRKVRNRVGRGIGSGNGKTAGKGHKGQNARSGGGVRLGFEGGQTPLFRRLPKRGFTNINRKEFAIVNLSTLNRFEDGTEVTPELLLETGVISKLNDGVKVLASGAVEKKLTVKAHKFSSSAKEAIEAAGGSVEVI</sequence>
<name>RL15_BACCR</name>
<comment type="function">
    <text evidence="1">Binds to the 23S rRNA.</text>
</comment>
<comment type="subunit">
    <text evidence="1">Part of the 50S ribosomal subunit.</text>
</comment>
<comment type="similarity">
    <text evidence="1">Belongs to the universal ribosomal protein uL15 family.</text>
</comment>
<accession>Q81J23</accession>
<evidence type="ECO:0000255" key="1">
    <source>
        <dbReference type="HAMAP-Rule" id="MF_01341"/>
    </source>
</evidence>
<evidence type="ECO:0000256" key="2">
    <source>
        <dbReference type="SAM" id="MobiDB-lite"/>
    </source>
</evidence>
<evidence type="ECO:0000305" key="3"/>
<proteinExistence type="inferred from homology"/>
<keyword id="KW-1185">Reference proteome</keyword>
<keyword id="KW-0687">Ribonucleoprotein</keyword>
<keyword id="KW-0689">Ribosomal protein</keyword>
<keyword id="KW-0694">RNA-binding</keyword>
<keyword id="KW-0699">rRNA-binding</keyword>